<comment type="function">
    <text evidence="1">Inhibits RpoS proteolysis by regulating RssB activity, thereby increasing the stability of the sigma stress factor RpoS during oxidative stress. Its effect on RpoS stability is due to its interaction with RssB, which probably blocks the interaction of RssB with RpoS, and the consequent delivery of the RssB-RpoS complex to the ClpXP protein degradation pathway.</text>
</comment>
<comment type="subunit">
    <text evidence="1">Interacts with RssB.</text>
</comment>
<comment type="subcellular location">
    <subcellularLocation>
        <location evidence="1">Cytoplasm</location>
    </subcellularLocation>
</comment>
<comment type="similarity">
    <text evidence="1">Belongs to the GpW/Gp25 family. IraD subfamily.</text>
</comment>
<reference key="1">
    <citation type="journal article" date="2008" name="Genome Res.">
        <title>Comparative genome analysis of Salmonella enteritidis PT4 and Salmonella gallinarum 287/91 provides insights into evolutionary and host adaptation pathways.</title>
        <authorList>
            <person name="Thomson N.R."/>
            <person name="Clayton D.J."/>
            <person name="Windhorst D."/>
            <person name="Vernikos G."/>
            <person name="Davidson S."/>
            <person name="Churcher C."/>
            <person name="Quail M.A."/>
            <person name="Stevens M."/>
            <person name="Jones M.A."/>
            <person name="Watson M."/>
            <person name="Barron A."/>
            <person name="Layton A."/>
            <person name="Pickard D."/>
            <person name="Kingsley R.A."/>
            <person name="Bignell A."/>
            <person name="Clark L."/>
            <person name="Harris B."/>
            <person name="Ormond D."/>
            <person name="Abdellah Z."/>
            <person name="Brooks K."/>
            <person name="Cherevach I."/>
            <person name="Chillingworth T."/>
            <person name="Woodward J."/>
            <person name="Norberczak H."/>
            <person name="Lord A."/>
            <person name="Arrowsmith C."/>
            <person name="Jagels K."/>
            <person name="Moule S."/>
            <person name="Mungall K."/>
            <person name="Saunders M."/>
            <person name="Whitehead S."/>
            <person name="Chabalgoity J.A."/>
            <person name="Maskell D."/>
            <person name="Humphreys T."/>
            <person name="Roberts M."/>
            <person name="Barrow P.A."/>
            <person name="Dougan G."/>
            <person name="Parkhill J."/>
        </authorList>
    </citation>
    <scope>NUCLEOTIDE SEQUENCE [LARGE SCALE GENOMIC DNA]</scope>
    <source>
        <strain>287/91 / NCTC 13346</strain>
    </source>
</reference>
<proteinExistence type="inferred from homology"/>
<evidence type="ECO:0000255" key="1">
    <source>
        <dbReference type="HAMAP-Rule" id="MF_02010"/>
    </source>
</evidence>
<protein>
    <recommendedName>
        <fullName evidence="1">Anti-adapter protein IraD</fullName>
    </recommendedName>
</protein>
<name>IRAD_SALG2</name>
<accession>B5RE89</accession>
<feature type="chain" id="PRO_1000189485" description="Anti-adapter protein IraD">
    <location>
        <begin position="1"/>
        <end position="126"/>
    </location>
</feature>
<keyword id="KW-0963">Cytoplasm</keyword>
<keyword id="KW-0346">Stress response</keyword>
<gene>
    <name evidence="1" type="primary">iraD</name>
    <name type="ordered locus">SG3024</name>
</gene>
<dbReference type="EMBL" id="AM933173">
    <property type="protein sequence ID" value="CAR38828.1"/>
    <property type="molecule type" value="Genomic_DNA"/>
</dbReference>
<dbReference type="RefSeq" id="WP_000988938.1">
    <property type="nucleotide sequence ID" value="NC_011274.1"/>
</dbReference>
<dbReference type="SMR" id="B5RE89"/>
<dbReference type="KEGG" id="seg:SG3024"/>
<dbReference type="HOGENOM" id="CLU_1977621_0_0_6"/>
<dbReference type="Proteomes" id="UP000008321">
    <property type="component" value="Chromosome"/>
</dbReference>
<dbReference type="GO" id="GO:0005737">
    <property type="term" value="C:cytoplasm"/>
    <property type="evidence" value="ECO:0007669"/>
    <property type="project" value="UniProtKB-SubCell"/>
</dbReference>
<dbReference type="GO" id="GO:0043856">
    <property type="term" value="F:anti-sigma factor antagonist activity"/>
    <property type="evidence" value="ECO:0007669"/>
    <property type="project" value="InterPro"/>
</dbReference>
<dbReference type="GO" id="GO:0034599">
    <property type="term" value="P:cellular response to oxidative stress"/>
    <property type="evidence" value="ECO:0007669"/>
    <property type="project" value="UniProtKB-UniRule"/>
</dbReference>
<dbReference type="GO" id="GO:0006974">
    <property type="term" value="P:DNA damage response"/>
    <property type="evidence" value="ECO:0007669"/>
    <property type="project" value="InterPro"/>
</dbReference>
<dbReference type="HAMAP" id="MF_02010">
    <property type="entry name" value="IraD"/>
    <property type="match status" value="1"/>
</dbReference>
<dbReference type="InterPro" id="IPR023776">
    <property type="entry name" value="Anti-adapt_IraD"/>
</dbReference>
<dbReference type="InterPro" id="IPR007048">
    <property type="entry name" value="IraD/Gp25-like"/>
</dbReference>
<dbReference type="NCBIfam" id="NF010727">
    <property type="entry name" value="PRK14128.1-2"/>
    <property type="match status" value="1"/>
</dbReference>
<dbReference type="Pfam" id="PF04965">
    <property type="entry name" value="GPW_gp25"/>
    <property type="match status" value="1"/>
</dbReference>
<organism>
    <name type="scientific">Salmonella gallinarum (strain 287/91 / NCTC 13346)</name>
    <dbReference type="NCBI Taxonomy" id="550538"/>
    <lineage>
        <taxon>Bacteria</taxon>
        <taxon>Pseudomonadati</taxon>
        <taxon>Pseudomonadota</taxon>
        <taxon>Gammaproteobacteria</taxon>
        <taxon>Enterobacterales</taxon>
        <taxon>Enterobacteriaceae</taxon>
        <taxon>Salmonella</taxon>
    </lineage>
</organism>
<sequence>MMTPTIPVALFDRLLVEGISPHELVRRKLMCLFNSCAVPGGETLPPLLTRGMPEWHEVNVGDKRVLNWFCRELRAAILRYEPSINMLKVSVKDAHHQTLALSLEAMLQDESEPLRLEIAYSNGRWR</sequence>